<accession>Q0TDZ7</accession>
<organism>
    <name type="scientific">Escherichia coli O6:K15:H31 (strain 536 / UPEC)</name>
    <dbReference type="NCBI Taxonomy" id="362663"/>
    <lineage>
        <taxon>Bacteria</taxon>
        <taxon>Pseudomonadati</taxon>
        <taxon>Pseudomonadota</taxon>
        <taxon>Gammaproteobacteria</taxon>
        <taxon>Enterobacterales</taxon>
        <taxon>Enterobacteriaceae</taxon>
        <taxon>Escherichia</taxon>
    </lineage>
</organism>
<gene>
    <name evidence="1" type="primary">lplT</name>
    <name type="ordered locus">ECP_2848</name>
</gene>
<dbReference type="EMBL" id="CP000247">
    <property type="protein sequence ID" value="ABG70832.1"/>
    <property type="molecule type" value="Genomic_DNA"/>
</dbReference>
<dbReference type="RefSeq" id="WP_000004599.1">
    <property type="nucleotide sequence ID" value="NC_008253.1"/>
</dbReference>
<dbReference type="SMR" id="Q0TDZ7"/>
<dbReference type="KEGG" id="ecp:ECP_2848"/>
<dbReference type="HOGENOM" id="CLU_047399_0_0_6"/>
<dbReference type="Proteomes" id="UP000009182">
    <property type="component" value="Chromosome"/>
</dbReference>
<dbReference type="GO" id="GO:0005886">
    <property type="term" value="C:plasma membrane"/>
    <property type="evidence" value="ECO:0007669"/>
    <property type="project" value="UniProtKB-SubCell"/>
</dbReference>
<dbReference type="GO" id="GO:0051978">
    <property type="term" value="F:lysophospholipid:sodium symporter activity"/>
    <property type="evidence" value="ECO:0007669"/>
    <property type="project" value="InterPro"/>
</dbReference>
<dbReference type="CDD" id="cd06173">
    <property type="entry name" value="MFS_MefA_like"/>
    <property type="match status" value="1"/>
</dbReference>
<dbReference type="FunFam" id="1.20.1250.20:FF:000091">
    <property type="entry name" value="Lysophospholipid transporter LplT"/>
    <property type="match status" value="1"/>
</dbReference>
<dbReference type="Gene3D" id="1.20.1250.20">
    <property type="entry name" value="MFS general substrate transporter like domains"/>
    <property type="match status" value="1"/>
</dbReference>
<dbReference type="HAMAP" id="MF_01585">
    <property type="entry name" value="MFS_LplT"/>
    <property type="match status" value="1"/>
</dbReference>
<dbReference type="InterPro" id="IPR023727">
    <property type="entry name" value="LysoPLipid__transptr_LplT"/>
</dbReference>
<dbReference type="InterPro" id="IPR011701">
    <property type="entry name" value="MFS"/>
</dbReference>
<dbReference type="InterPro" id="IPR036259">
    <property type="entry name" value="MFS_trans_sf"/>
</dbReference>
<dbReference type="NCBIfam" id="NF008397">
    <property type="entry name" value="PRK11195.1"/>
    <property type="match status" value="1"/>
</dbReference>
<dbReference type="PANTHER" id="PTHR43266">
    <property type="entry name" value="MACROLIDE-EFFLUX PROTEIN"/>
    <property type="match status" value="1"/>
</dbReference>
<dbReference type="PANTHER" id="PTHR43266:SF2">
    <property type="entry name" value="MAJOR FACILITATOR SUPERFAMILY (MFS) PROFILE DOMAIN-CONTAINING PROTEIN"/>
    <property type="match status" value="1"/>
</dbReference>
<dbReference type="Pfam" id="PF07690">
    <property type="entry name" value="MFS_1"/>
    <property type="match status" value="1"/>
</dbReference>
<dbReference type="SUPFAM" id="SSF103473">
    <property type="entry name" value="MFS general substrate transporter"/>
    <property type="match status" value="1"/>
</dbReference>
<reference key="1">
    <citation type="journal article" date="2006" name="Mol. Microbiol.">
        <title>Role of pathogenicity island-associated integrases in the genome plasticity of uropathogenic Escherichia coli strain 536.</title>
        <authorList>
            <person name="Hochhut B."/>
            <person name="Wilde C."/>
            <person name="Balling G."/>
            <person name="Middendorf B."/>
            <person name="Dobrindt U."/>
            <person name="Brzuszkiewicz E."/>
            <person name="Gottschalk G."/>
            <person name="Carniel E."/>
            <person name="Hacker J."/>
        </authorList>
    </citation>
    <scope>NUCLEOTIDE SEQUENCE [LARGE SCALE GENOMIC DNA]</scope>
    <source>
        <strain>536 / UPEC</strain>
    </source>
</reference>
<keyword id="KW-0997">Cell inner membrane</keyword>
<keyword id="KW-1003">Cell membrane</keyword>
<keyword id="KW-0445">Lipid transport</keyword>
<keyword id="KW-0472">Membrane</keyword>
<keyword id="KW-0812">Transmembrane</keyword>
<keyword id="KW-1133">Transmembrane helix</keyword>
<keyword id="KW-0813">Transport</keyword>
<evidence type="ECO:0000255" key="1">
    <source>
        <dbReference type="HAMAP-Rule" id="MF_01585"/>
    </source>
</evidence>
<feature type="chain" id="PRO_0000309828" description="Lysophospholipid transporter LplT">
    <location>
        <begin position="1"/>
        <end position="397"/>
    </location>
</feature>
<feature type="topological domain" description="Periplasmic" evidence="1">
    <location>
        <begin position="1"/>
        <end position="17"/>
    </location>
</feature>
<feature type="transmembrane region" description="Helical" evidence="1">
    <location>
        <begin position="18"/>
        <end position="38"/>
    </location>
</feature>
<feature type="topological domain" description="Cytoplasmic" evidence="1">
    <location>
        <begin position="39"/>
        <end position="52"/>
    </location>
</feature>
<feature type="transmembrane region" description="Helical" evidence="1">
    <location>
        <begin position="53"/>
        <end position="73"/>
    </location>
</feature>
<feature type="topological domain" description="Periplasmic" evidence="1">
    <location>
        <begin position="74"/>
        <end position="90"/>
    </location>
</feature>
<feature type="transmembrane region" description="Helical" evidence="1">
    <location>
        <begin position="91"/>
        <end position="111"/>
    </location>
</feature>
<feature type="topological domain" description="Cytoplasmic" evidence="1">
    <location>
        <begin position="112"/>
        <end position="144"/>
    </location>
</feature>
<feature type="transmembrane region" description="Helical" evidence="1">
    <location>
        <begin position="145"/>
        <end position="165"/>
    </location>
</feature>
<feature type="topological domain" description="Periplasmic" evidence="1">
    <location>
        <position position="166"/>
    </location>
</feature>
<feature type="transmembrane region" description="Helical" evidence="1">
    <location>
        <begin position="167"/>
        <end position="187"/>
    </location>
</feature>
<feature type="topological domain" description="Cytoplasmic" evidence="1">
    <location>
        <begin position="188"/>
        <end position="226"/>
    </location>
</feature>
<feature type="transmembrane region" description="Helical" evidence="1">
    <location>
        <begin position="227"/>
        <end position="247"/>
    </location>
</feature>
<feature type="topological domain" description="Periplasmic" evidence="1">
    <location>
        <begin position="248"/>
        <end position="256"/>
    </location>
</feature>
<feature type="transmembrane region" description="Helical" evidence="1">
    <location>
        <begin position="257"/>
        <end position="277"/>
    </location>
</feature>
<feature type="topological domain" description="Cytoplasmic" evidence="1">
    <location>
        <begin position="278"/>
        <end position="280"/>
    </location>
</feature>
<feature type="transmembrane region" description="Helical" evidence="1">
    <location>
        <begin position="281"/>
        <end position="301"/>
    </location>
</feature>
<feature type="topological domain" description="Periplasmic" evidence="1">
    <location>
        <begin position="302"/>
        <end position="304"/>
    </location>
</feature>
<feature type="transmembrane region" description="Helical" evidence="1">
    <location>
        <begin position="305"/>
        <end position="325"/>
    </location>
</feature>
<feature type="topological domain" description="Cytoplasmic" evidence="1">
    <location>
        <begin position="326"/>
        <end position="343"/>
    </location>
</feature>
<feature type="transmembrane region" description="Helical" evidence="1">
    <location>
        <begin position="344"/>
        <end position="364"/>
    </location>
</feature>
<feature type="topological domain" description="Periplasmic" evidence="1">
    <location>
        <begin position="365"/>
        <end position="366"/>
    </location>
</feature>
<feature type="transmembrane region" description="Helical" evidence="1">
    <location>
        <begin position="367"/>
        <end position="387"/>
    </location>
</feature>
<feature type="topological domain" description="Cytoplasmic" evidence="1">
    <location>
        <begin position="388"/>
        <end position="397"/>
    </location>
</feature>
<name>LPLT_ECOL5</name>
<proteinExistence type="inferred from homology"/>
<sequence>MSESVHTNTSLWSKGMKAVIVAQFLSAFGDNALLFATLALLKAQFYPEWSQPILQMVFVGAYILFAPFVGQVADSFAKGRVMMFANGLKLLGAASICFGINPFLGYTLVGVGAAAYSPAKYGILGELTTGSKLVKANGLMEASTIAAILLGSVAGGVLADWHILVALAACALAYGGAVVANIYIPKLAAARPGQSWNLISMTRSFLNACTSLWRNGETRFSLVGTSLFWGAGVTLRFLLVLWVPVALGITDNATPTYLNAMVAIGIVVGAGAAAKLVTLETVSRCMPAGILIGVVVLIFSLQHELLPAYALLMLIGVLGGFFVVPLNALLQERGKKSVGAGNAIAVQNLGENSAMLLMLGIYSLAVMVGIPVVPIGIGFGALFALAITALWIWQRRH</sequence>
<protein>
    <recommendedName>
        <fullName evidence="1">Lysophospholipid transporter LplT</fullName>
    </recommendedName>
</protein>
<comment type="function">
    <text evidence="1">Catalyzes the facilitated diffusion of 2-acyl-glycero-3-phosphoethanolamine (2-acyl-GPE) into the cell.</text>
</comment>
<comment type="subcellular location">
    <subcellularLocation>
        <location evidence="1">Cell inner membrane</location>
        <topology evidence="1">Multi-pass membrane protein</topology>
    </subcellularLocation>
</comment>
<comment type="similarity">
    <text evidence="1">Belongs to the major facilitator superfamily. LplT (TC 2.A.1.42) family.</text>
</comment>